<name>DNBI_EHV2</name>
<gene>
    <name evidence="1" type="primary">DBP</name>
    <name type="synonym">6</name>
</gene>
<evidence type="ECO:0000255" key="1">
    <source>
        <dbReference type="HAMAP-Rule" id="MF_04007"/>
    </source>
</evidence>
<proteinExistence type="inferred from homology"/>
<feature type="chain" id="PRO_0000406168" description="Major DNA-binding protein">
    <location>
        <begin position="1"/>
        <end position="1145"/>
    </location>
</feature>
<feature type="region of interest" description="Required for nuclear localization" evidence="1">
    <location>
        <begin position="1115"/>
        <end position="1145"/>
    </location>
</feature>
<protein>
    <recommendedName>
        <fullName evidence="1">Major DNA-binding protein</fullName>
    </recommendedName>
</protein>
<dbReference type="EMBL" id="U20824">
    <property type="protein sequence ID" value="AAC13793.1"/>
    <property type="molecule type" value="Genomic_DNA"/>
</dbReference>
<dbReference type="PIR" id="S55600">
    <property type="entry name" value="S55600"/>
</dbReference>
<dbReference type="SMR" id="Q66611"/>
<dbReference type="KEGG" id="vg:1461061"/>
<dbReference type="Proteomes" id="UP000007083">
    <property type="component" value="Segment"/>
</dbReference>
<dbReference type="GO" id="GO:0042025">
    <property type="term" value="C:host cell nucleus"/>
    <property type="evidence" value="ECO:0007669"/>
    <property type="project" value="UniProtKB-SubCell"/>
</dbReference>
<dbReference type="GO" id="GO:0003697">
    <property type="term" value="F:single-stranded DNA binding"/>
    <property type="evidence" value="ECO:0007669"/>
    <property type="project" value="InterPro"/>
</dbReference>
<dbReference type="GO" id="GO:0006260">
    <property type="term" value="P:DNA replication"/>
    <property type="evidence" value="ECO:0007669"/>
    <property type="project" value="UniProtKB-KW"/>
</dbReference>
<dbReference type="Gene3D" id="1.20.190.40">
    <property type="entry name" value="Viral ssDNA binding protein, head domain"/>
    <property type="match status" value="2"/>
</dbReference>
<dbReference type="HAMAP" id="MF_04007">
    <property type="entry name" value="HSV_DNBI"/>
    <property type="match status" value="1"/>
</dbReference>
<dbReference type="InterPro" id="IPR035989">
    <property type="entry name" value="DBP_sf"/>
</dbReference>
<dbReference type="InterPro" id="IPR043031">
    <property type="entry name" value="Viral_ssDBP_head"/>
</dbReference>
<dbReference type="InterPro" id="IPR000635">
    <property type="entry name" value="Viral_ssDNA-bd"/>
</dbReference>
<dbReference type="Pfam" id="PF00747">
    <property type="entry name" value="Viral_DNA_bp"/>
    <property type="match status" value="1"/>
</dbReference>
<dbReference type="SUPFAM" id="SSF118208">
    <property type="entry name" value="Viral ssDNA binding protein"/>
    <property type="match status" value="1"/>
</dbReference>
<keyword id="KW-0235">DNA replication</keyword>
<keyword id="KW-0238">DNA-binding</keyword>
<keyword id="KW-1048">Host nucleus</keyword>
<keyword id="KW-1185">Reference proteome</keyword>
<sequence>MNSNRAAAGPVEENVGTQASVGPCGFVYLYPGDTFPVEEASLLGNLHAGGEVFSLPLLSGLTVEADFHVNVKAVHKKLDPATVSVKASAYHREVIVFANAACFKPIFAGPGLEGLCAASRQLFGYAEFEERAGGAARPFELADLGHLLPGAESHIAGVVVTESFKERLYRGQLVVVESQIQSVRVGECDAFKVPLYDGELFAKSPCRENLRYFYHAGVSRYLFEAHYTSLAQALRVRDVPGLIGALERQSFHDQYKLPKVYECREFPATGHRGAGDCSLTIVDSVATELAVSYGLSFLEVPQEGTALLSYDKWPIFEGCETPEQRVEALTQFNAKQAVHVHSQLFSGNSVLYLARVQKQASNRGGGGENVYNSFFMGHGLACLAEPTQKENGLPSFPGVPASALSGSNYSLHHLAYAASFSPQMLARHCYYLQFAQHQKSSNNSGYNVPTYVGTAANTPMCELCRGSCPASCVNTLFYRLRDRFPPVVASVRRDPYVVTGVAGAYNDLDIAGNFANYRDKDEESNQSEEREKFTYWQVTQTVLERLSEAGICEGGEDVGDAIHNIGSFLKVFKEIDGIVDGEVARFINSMVKNNVNYRESIKSIHHIVQYVCNVYWQPPCPVFLNLYYRCVLAVVQDICLPTCMMYEQENPAVGVSPGEWLKMHYQTLWTNFKNSCIDKGVLTGTEYKVVHKDQFCDFFDVDSAARGEFVSCKTQVRISRALMMAPRVMKIKNRIIFSNSPGTESIQNAFVRGTPKGDSCVVSGPYMRFLSTYHSQLFPGAKISPLFLWHTFSKKRQLPVFPNVPRESVTELANYVEQNSRLHGETSIIDVVPENFYTYAKVRLNNALFRACGQTQFYATTIHCLTPKIQTVPAEEYPHALGARGVADVGEYLGAARELTVPTVQCTSRDNICEVGKCRPIVTLPLVVNKYTGVTGNSQIFQCANLGYFIGRGVDKNLIPDAGSFKKQGVSTSMRKRHVFMTPLSDHLLRRSVQGAAVAFEIEGVRRRVQQILSDGDNPHVIRDVVLQLVKSLGSECRSVSEYDLEYYMGQYYIFAGDVSERLQRLSDLGGDWSEEWALSVLGEEEDPLGGELEFEKVEDAECLGHPQQDEFALAPQAAAPQYSGSSSVAGKKRKANVILGDLDL</sequence>
<reference key="1">
    <citation type="journal article" date="1995" name="J. Mol. Biol.">
        <title>The DNA sequence of equine herpesvirus 2.</title>
        <authorList>
            <person name="Telford E.A.R."/>
            <person name="Watson M.S."/>
            <person name="Aird H.C."/>
            <person name="Perry J."/>
            <person name="Davison A.J."/>
        </authorList>
    </citation>
    <scope>NUCLEOTIDE SEQUENCE [LARGE SCALE GENOMIC DNA]</scope>
</reference>
<organismHost>
    <name type="scientific">Equus caballus</name>
    <name type="common">Horse</name>
    <dbReference type="NCBI Taxonomy" id="9796"/>
</organismHost>
<comment type="function">
    <text evidence="1">Plays several crucial roles in viral infection. Participates in the opening of the viral DNA origin to initiate replication by interacting with the origin-binding protein. May disrupt loops, hairpins and other secondary structures present on ssDNA to reduce and eliminate pausing of viral DNA polymerase at specific sites during elongation. Promotes viral DNA recombination by performing strand-transfer, characterized by the ability to transfer a DNA strand from a linear duplex to a complementary single-stranded DNA circle. Can also catalyze the renaturation of complementary single strands. Additionally, reorganizes the host cell nucleus, leading to the formation of prereplicative sites and replication compartments. This process is driven by the protein which can form double-helical filaments in the absence of DNA.</text>
</comment>
<comment type="subunit">
    <text evidence="1">Homooligomers. Forms double-helical filaments necessary for the formation of replication compartments within the host nucleus. Interacts with the origin-binding protein. Interacts with the helicase primase complex; this interaction stimulates primer synthesis activity of the helicase-primase complex. Interacts with the DNA polymerase. Interacts with the alkaline exonuclease; this interaction increases its nuclease processivity.</text>
</comment>
<comment type="subcellular location">
    <subcellularLocation>
        <location evidence="1">Host nucleus</location>
    </subcellularLocation>
    <text evidence="1">In the absence of DNA replication, found in the nuclear framework-associated structures (prereplicative sites). As viral DNA replication proceeds, it migrates to globular intranuclear structures (replication compartments).</text>
</comment>
<comment type="similarity">
    <text evidence="1">Belongs to the herpesviridae major DNA-binding protein family.</text>
</comment>
<accession>Q66611</accession>
<organism>
    <name type="scientific">Equine herpesvirus 2 (strain 86/87)</name>
    <name type="common">EHV-2</name>
    <dbReference type="NCBI Taxonomy" id="82831"/>
    <lineage>
        <taxon>Viruses</taxon>
        <taxon>Duplodnaviria</taxon>
        <taxon>Heunggongvirae</taxon>
        <taxon>Peploviricota</taxon>
        <taxon>Herviviricetes</taxon>
        <taxon>Herpesvirales</taxon>
        <taxon>Orthoherpesviridae</taxon>
        <taxon>Gammaherpesvirinae</taxon>
        <taxon>Percavirus</taxon>
        <taxon>Percavirus equidgamma2</taxon>
        <taxon>Equid gammaherpesvirus 2</taxon>
    </lineage>
</organism>